<evidence type="ECO:0000250" key="1">
    <source>
        <dbReference type="UniProtKB" id="P41493"/>
    </source>
</evidence>
<evidence type="ECO:0000255" key="2"/>
<evidence type="ECO:0000269" key="3">
    <source>
    </source>
</evidence>
<evidence type="ECO:0000303" key="4">
    <source>
    </source>
</evidence>
<evidence type="ECO:0000305" key="5"/>
<proteinExistence type="evidence at protein level"/>
<feature type="peptide" id="PRO_0000378901" description="Sulfakinin-1" evidence="3">
    <location>
        <begin position="1"/>
        <end position="11"/>
    </location>
</feature>
<feature type="modified residue" description="Sulfotyrosine" evidence="1">
    <location>
        <position position="6"/>
    </location>
</feature>
<feature type="modified residue" description="Phenylalanine amide" evidence="3">
    <location>
        <position position="11"/>
    </location>
</feature>
<protein>
    <recommendedName>
        <fullName evidence="4">Sulfakinin-1</fullName>
        <shortName evidence="4">SymPa-SK-1</shortName>
    </recommendedName>
</protein>
<sequence length="11" mass="1445">EQFDDYGHMRF</sequence>
<keyword id="KW-0027">Amidation</keyword>
<keyword id="KW-0903">Direct protein sequencing</keyword>
<keyword id="KW-0372">Hormone</keyword>
<keyword id="KW-0527">Neuropeptide</keyword>
<keyword id="KW-0964">Secreted</keyword>
<keyword id="KW-0765">Sulfation</keyword>
<accession>P85786</accession>
<comment type="function">
    <text evidence="1">Myotropic peptide.</text>
</comment>
<comment type="subcellular location">
    <subcellularLocation>
        <location evidence="5">Secreted</location>
    </subcellularLocation>
</comment>
<comment type="similarity">
    <text evidence="2">Belongs to the gastrin/cholecystokinin family.</text>
</comment>
<name>SK1_SYMPA</name>
<reference evidence="5" key="1">
    <citation type="journal article" date="2009" name="BMC Evol. Biol.">
        <title>A proteomic approach for studying insect phylogeny: CAPA peptides of ancient insect taxa (Dictyoptera, Blattoptera) as a test case.</title>
        <authorList>
            <person name="Roth S."/>
            <person name="Fromm B."/>
            <person name="Gaede G."/>
            <person name="Predel R."/>
        </authorList>
    </citation>
    <scope>PROTEIN SEQUENCE</scope>
    <scope>AMIDATION AT PHE-11</scope>
    <source>
        <tissue evidence="3">Corpora cardiaca</tissue>
    </source>
</reference>
<dbReference type="GO" id="GO:0005576">
    <property type="term" value="C:extracellular region"/>
    <property type="evidence" value="ECO:0007669"/>
    <property type="project" value="UniProtKB-SubCell"/>
</dbReference>
<dbReference type="GO" id="GO:0005179">
    <property type="term" value="F:hormone activity"/>
    <property type="evidence" value="ECO:0007669"/>
    <property type="project" value="UniProtKB-KW"/>
</dbReference>
<dbReference type="GO" id="GO:0007218">
    <property type="term" value="P:neuropeptide signaling pathway"/>
    <property type="evidence" value="ECO:0007669"/>
    <property type="project" value="UniProtKB-KW"/>
</dbReference>
<dbReference type="InterPro" id="IPR013152">
    <property type="entry name" value="Gastrin/cholecystokinin_CS"/>
</dbReference>
<dbReference type="InterPro" id="IPR013259">
    <property type="entry name" value="Sulfakinin"/>
</dbReference>
<dbReference type="Pfam" id="PF08257">
    <property type="entry name" value="Sulfakinin"/>
    <property type="match status" value="1"/>
</dbReference>
<dbReference type="PROSITE" id="PS00259">
    <property type="entry name" value="GASTRIN"/>
    <property type="match status" value="1"/>
</dbReference>
<organism>
    <name type="scientific">Symploce pallens</name>
    <name type="common">Smooth cockroach</name>
    <name type="synonym">Symploce capitata</name>
    <dbReference type="NCBI Taxonomy" id="36974"/>
    <lineage>
        <taxon>Eukaryota</taxon>
        <taxon>Metazoa</taxon>
        <taxon>Ecdysozoa</taxon>
        <taxon>Arthropoda</taxon>
        <taxon>Hexapoda</taxon>
        <taxon>Insecta</taxon>
        <taxon>Pterygota</taxon>
        <taxon>Neoptera</taxon>
        <taxon>Polyneoptera</taxon>
        <taxon>Dictyoptera</taxon>
        <taxon>Blattodea</taxon>
        <taxon>Blaberoidea</taxon>
        <taxon>Blattellidae</taxon>
        <taxon>Symploce</taxon>
    </lineage>
</organism>